<proteinExistence type="evidence at protein level"/>
<sequence length="115" mass="11951">MEGQAVTTNPWLIMAINMTVVFAVLIALGILMEIVHLIDPTKKKKEAPAATAPVATPTATPVAPANASAQNEDEVVAAIVGAIVAMGYSSEQIASIRPTATSAKWRLEGRLSGRG</sequence>
<evidence type="ECO:0000255" key="1"/>
<evidence type="ECO:0000256" key="2">
    <source>
        <dbReference type="SAM" id="MobiDB-lite"/>
    </source>
</evidence>
<evidence type="ECO:0000269" key="3">
    <source>
    </source>
</evidence>
<evidence type="ECO:0000269" key="4">
    <source>
    </source>
</evidence>
<evidence type="ECO:0000269" key="5">
    <source>
    </source>
</evidence>
<evidence type="ECO:0000269" key="6">
    <source>
    </source>
</evidence>
<evidence type="ECO:0000269" key="7">
    <source>
    </source>
</evidence>
<evidence type="ECO:0000269" key="8">
    <source>
    </source>
</evidence>
<evidence type="ECO:0000269" key="9">
    <source>
    </source>
</evidence>
<evidence type="ECO:0000269" key="10">
    <source>
    </source>
</evidence>
<evidence type="ECO:0000269" key="11">
    <source ref="5"/>
</evidence>
<evidence type="ECO:0000303" key="12">
    <source>
    </source>
</evidence>
<evidence type="ECO:0000305" key="13"/>
<comment type="function">
    <text evidence="3 4 5 7 8 9">Subunit of the sodium ion pump methylmalonyl-CoA decarboxylase, which converts the chemical energy of a decarboxylation reaction into an electrochemical gradient of Na(+) ions across the cytoplasmic membrane, thereby creating a sodium ion motive force that is used for ATP synthesis (PubMed:1991479, PubMed:2920730, PubMed:3609308, PubMed:6852015, PubMed:7070502, PubMed:7601825). The delta subunit is required for catalytic activity as well as for the proper assembly of the individual subunits to an enzyme complex (PubMed:7601825). Can also convert malonyl-CoA into acetyl-CoA (PubMed:2920730, PubMed:6852015).</text>
</comment>
<comment type="catalytic activity">
    <reaction evidence="4 7 9">
        <text>(S)-methylmalonyl-CoA + Na(+)(in) + H(+)(out) = propanoyl-CoA + Na(+)(out) + CO2</text>
        <dbReference type="Rhea" id="RHEA:21396"/>
        <dbReference type="ChEBI" id="CHEBI:15378"/>
        <dbReference type="ChEBI" id="CHEBI:16526"/>
        <dbReference type="ChEBI" id="CHEBI:29101"/>
        <dbReference type="ChEBI" id="CHEBI:57327"/>
        <dbReference type="ChEBI" id="CHEBI:57392"/>
        <dbReference type="EC" id="7.2.4.3"/>
    </reaction>
</comment>
<comment type="activity regulation">
    <text evidence="7 9">Completely inhibited by avidin.</text>
</comment>
<comment type="subunit">
    <text evidence="9 10">The methylmalonyl-CoA decarboxylase is composed of five subunits: the carboxyltransferase alpha subunit (MmdA), the tunnel beta subunit (MmdB), the biotin-containing gamma subunit (MmdC), and the delta (MmdD) and epsilon (MmdE) subunits.</text>
</comment>
<comment type="subcellular location">
    <subcellularLocation>
        <location evidence="6 7 8 11">Cell membrane</location>
        <topology evidence="1">Single-pass membrane protein</topology>
    </subcellularLocation>
</comment>
<comment type="PTM">
    <text evidence="10">The N-terminus is blocked.</text>
</comment>
<comment type="similarity">
    <text evidence="13">Belongs to the OadG family.</text>
</comment>
<feature type="chain" id="PRO_0000453539" description="Methylmalonyl-CoA decarboxylase subunit delta">
    <location>
        <begin position="1"/>
        <end position="115"/>
    </location>
</feature>
<feature type="transmembrane region" description="Helical" evidence="1">
    <location>
        <begin position="11"/>
        <end position="31"/>
    </location>
</feature>
<feature type="region of interest" description="Disordered" evidence="2">
    <location>
        <begin position="46"/>
        <end position="70"/>
    </location>
</feature>
<feature type="compositionally biased region" description="Low complexity" evidence="2">
    <location>
        <begin position="48"/>
        <end position="65"/>
    </location>
</feature>
<name>MMDD_VEIPA</name>
<protein>
    <recommendedName>
        <fullName evidence="13">Methylmalonyl-CoA decarboxylase subunit delta</fullName>
        <ecNumber evidence="4 7 9">7.2.4.3</ecNumber>
    </recommendedName>
</protein>
<accession>Q56724</accession>
<accession>Q56723</accession>
<organism>
    <name type="scientific">Veillonella parvula</name>
    <name type="common">Staphylococcus parvulus</name>
    <dbReference type="NCBI Taxonomy" id="29466"/>
    <lineage>
        <taxon>Bacteria</taxon>
        <taxon>Bacillati</taxon>
        <taxon>Bacillota</taxon>
        <taxon>Negativicutes</taxon>
        <taxon>Veillonellales</taxon>
        <taxon>Veillonellaceae</taxon>
        <taxon>Veillonella</taxon>
    </lineage>
</organism>
<keyword id="KW-1003">Cell membrane</keyword>
<keyword id="KW-0406">Ion transport</keyword>
<keyword id="KW-0472">Membrane</keyword>
<keyword id="KW-0915">Sodium</keyword>
<keyword id="KW-0739">Sodium transport</keyword>
<keyword id="KW-1278">Translocase</keyword>
<keyword id="KW-0812">Transmembrane</keyword>
<keyword id="KW-1133">Transmembrane helix</keyword>
<keyword id="KW-0813">Transport</keyword>
<reference key="1">
    <citation type="journal article" date="1993" name="J. Biol. Chem.">
        <title>Sequence of the sodium ion pump methylmalonyl-CoA decarboxylase from Veillonella parvula.</title>
        <authorList>
            <person name="Huder J.B."/>
            <person name="Dimroth P."/>
        </authorList>
    </citation>
    <scope>NUCLEOTIDE SEQUENCE [GENOMIC DNA]</scope>
    <scope>SUBUNIT</scope>
</reference>
<reference key="2">
    <citation type="journal article" date="1982" name="Nature">
        <title>Conversion of the chemical energy of methylmalonyl-CoA decarboxylation into a Na+ gradient.</title>
        <authorList>
            <person name="Hilpert W."/>
            <person name="Dimroth P."/>
        </authorList>
    </citation>
    <scope>FUNCTION</scope>
    <scope>SUBCELLULAR LOCATION</scope>
</reference>
<reference key="3">
    <citation type="journal article" date="1983" name="Eur. J. Biochem.">
        <title>Purification and characterization of a new sodium-transport decarboxylase. Methylmalonyl-CoA decarboxylase from Veillonella alcalescens.</title>
        <authorList>
            <person name="Hilpert W."/>
            <person name="Dimroth P."/>
        </authorList>
    </citation>
    <scope>FUNCTION</scope>
    <scope>CATALYTIC ACTIVITY</scope>
    <scope>ACTIVITY REGULATION</scope>
    <scope>SUBCELLULAR LOCATION</scope>
    <source>
        <strain>ATCC 17745</strain>
    </source>
</reference>
<reference key="4">
    <citation type="journal article" date="1984" name="Eur. J. Biochem.">
        <title>Reconstitution of Na+ transport from purified methylmalonyl-CoA decarboxylase and phospholipid vesicles.</title>
        <authorList>
            <person name="Hilpert W."/>
            <person name="Dimroth P."/>
        </authorList>
    </citation>
    <scope>SUBCELLULAR LOCATION</scope>
    <source>
        <strain>ATCC 17745</strain>
    </source>
</reference>
<reference key="5">
    <citation type="journal article" date="1986" name="FEBS Lett.">
        <title>Morphological properties of proteoliposomes reconstituted with the Na+ pump methylmalonyl-CoA decarboxylase from Veillonella alcalescens.</title>
        <authorList>
            <person name="Rohde M."/>
            <person name="Dakena P."/>
            <person name="Mayer F."/>
            <person name="Dimroth P."/>
        </authorList>
    </citation>
    <scope>SUBCELLULAR LOCATION</scope>
</reference>
<reference key="6">
    <citation type="journal article" date="1987" name="FEBS Lett.">
        <title>Stereochemistry of the methylmalonyl-CoA decarboxylation reaction.</title>
        <authorList>
            <person name="Hoffmann A."/>
            <person name="Dimroth P."/>
        </authorList>
    </citation>
    <scope>FUNCTION</scope>
</reference>
<reference key="7">
    <citation type="journal article" date="1989" name="Eur. J. Biochem.">
        <title>The carboxyltransferase activity of the sodium-ion-translocating methylmalonyl-CoA decarboxylase of Veillonella alcalescens.</title>
        <authorList>
            <person name="Hoffmann A."/>
            <person name="Hilpert W."/>
            <person name="Dimroth P."/>
        </authorList>
    </citation>
    <scope>FUNCTION</scope>
    <scope>CATALYTIC ACTIVITY</scope>
    <source>
        <strain>ATCC 17745</strain>
    </source>
</reference>
<reference key="8">
    <citation type="journal article" date="1991" name="Eur. J. Biochem.">
        <title>On the mechanism of sodium ion translocation by methylmalonyl-CoA decarboxylase from Veillonella alcalescens.</title>
        <authorList>
            <person name="Hilpert W."/>
            <person name="Dimroth P."/>
        </authorList>
    </citation>
    <scope>FUNCTION</scope>
    <source>
        <strain>ATCC 17745</strain>
    </source>
</reference>
<reference key="9">
    <citation type="journal article" date="1995" name="J. Bacteriol.">
        <title>Expression of the sodium ion pump methylmalonyl-coenzyme A-decarboxylase from Veillonella parvula and of mutated enzyme specimens in Escherichia coli.</title>
        <authorList>
            <person name="Huder J.B."/>
            <person name="Dimroth P."/>
        </authorList>
    </citation>
    <scope>FUNCTION</scope>
    <scope>CATALYTIC ACTIVITY</scope>
    <scope>ACTIVITY REGULATION</scope>
    <scope>SUBUNIT</scope>
</reference>
<dbReference type="EC" id="7.2.4.3" evidence="4 7 9"/>
<dbReference type="EMBL" id="L22208">
    <property type="protein sequence ID" value="AAC36821.1"/>
    <property type="molecule type" value="Unassigned_DNA"/>
</dbReference>
<dbReference type="EMBL" id="Z24754">
    <property type="protein sequence ID" value="CAA80873.1"/>
    <property type="molecule type" value="Genomic_DNA"/>
</dbReference>
<dbReference type="PIR" id="B49094">
    <property type="entry name" value="B49094"/>
</dbReference>
<dbReference type="RefSeq" id="WP_004696485.1">
    <property type="nucleotide sequence ID" value="NZ_CATYUD010000004.1"/>
</dbReference>
<dbReference type="SMR" id="Q56724"/>
<dbReference type="TCDB" id="3.B.1.1.2">
    <property type="family name" value="the na(+)-transporting carboxylic acid decarboxylase (nat-dc) family"/>
</dbReference>
<dbReference type="GeneID" id="69653797"/>
<dbReference type="OMA" id="LINMTVV"/>
<dbReference type="BioCyc" id="MetaCyc:MONOMER-21720"/>
<dbReference type="GO" id="GO:0005886">
    <property type="term" value="C:plasma membrane"/>
    <property type="evidence" value="ECO:0007669"/>
    <property type="project" value="UniProtKB-SubCell"/>
</dbReference>
<dbReference type="GO" id="GO:0015081">
    <property type="term" value="F:sodium ion transmembrane transporter activity"/>
    <property type="evidence" value="ECO:0007669"/>
    <property type="project" value="InterPro"/>
</dbReference>
<dbReference type="GO" id="GO:0036376">
    <property type="term" value="P:sodium ion export across plasma membrane"/>
    <property type="evidence" value="ECO:0007669"/>
    <property type="project" value="InterPro"/>
</dbReference>
<dbReference type="InterPro" id="IPR005899">
    <property type="entry name" value="Na_pump_deCOase"/>
</dbReference>
<dbReference type="Pfam" id="PF04277">
    <property type="entry name" value="OAD_gamma"/>
    <property type="match status" value="1"/>
</dbReference>
<gene>
    <name evidence="12" type="primary">mmdD</name>
</gene>